<keyword id="KW-1185">Reference proteome</keyword>
<feature type="chain" id="PRO_0000427628" description="Uncharacterized protein MT0992.1">
    <location>
        <begin position="1"/>
        <end position="160"/>
    </location>
</feature>
<organism>
    <name type="scientific">Mycobacterium tuberculosis (strain CDC 1551 / Oshkosh)</name>
    <dbReference type="NCBI Taxonomy" id="83331"/>
    <lineage>
        <taxon>Bacteria</taxon>
        <taxon>Bacillati</taxon>
        <taxon>Actinomycetota</taxon>
        <taxon>Actinomycetes</taxon>
        <taxon>Mycobacteriales</taxon>
        <taxon>Mycobacteriaceae</taxon>
        <taxon>Mycobacterium</taxon>
        <taxon>Mycobacterium tuberculosis complex</taxon>
    </lineage>
</organism>
<evidence type="ECO:0000305" key="1"/>
<proteinExistence type="predicted"/>
<reference key="1">
    <citation type="journal article" date="2002" name="J. Bacteriol.">
        <title>Whole-genome comparison of Mycobacterium tuberculosis clinical and laboratory strains.</title>
        <authorList>
            <person name="Fleischmann R.D."/>
            <person name="Alland D."/>
            <person name="Eisen J.A."/>
            <person name="Carpenter L."/>
            <person name="White O."/>
            <person name="Peterson J.D."/>
            <person name="DeBoy R.T."/>
            <person name="Dodson R.J."/>
            <person name="Gwinn M.L."/>
            <person name="Haft D.H."/>
            <person name="Hickey E.K."/>
            <person name="Kolonay J.F."/>
            <person name="Nelson W.C."/>
            <person name="Umayam L.A."/>
            <person name="Ermolaeva M.D."/>
            <person name="Salzberg S.L."/>
            <person name="Delcher A."/>
            <person name="Utterback T.R."/>
            <person name="Weidman J.F."/>
            <person name="Khouri H.M."/>
            <person name="Gill J."/>
            <person name="Mikula A."/>
            <person name="Bishai W."/>
            <person name="Jacobs W.R. Jr."/>
            <person name="Venter J.C."/>
            <person name="Fraser C.M."/>
        </authorList>
    </citation>
    <scope>NUCLEOTIDE SEQUENCE [LARGE SCALE GENOMIC DNA]</scope>
    <source>
        <strain>CDC 1551 / Oshkosh</strain>
    </source>
</reference>
<protein>
    <recommendedName>
        <fullName>Uncharacterized protein MT0992.1</fullName>
    </recommendedName>
</protein>
<name>Y964_MYCTO</name>
<dbReference type="EMBL" id="AE000516">
    <property type="protein sequence ID" value="AAK45241.1"/>
    <property type="status" value="ALT_INIT"/>
    <property type="molecule type" value="Genomic_DNA"/>
</dbReference>
<dbReference type="PIR" id="B70718">
    <property type="entry name" value="B70718"/>
</dbReference>
<dbReference type="SMR" id="P9WKM4"/>
<dbReference type="KEGG" id="mtc:MT0992.1"/>
<dbReference type="HOGENOM" id="CLU_1853032_0_0_11"/>
<dbReference type="Proteomes" id="UP000001020">
    <property type="component" value="Chromosome"/>
</dbReference>
<gene>
    <name type="ordered locus">MT0992.1</name>
</gene>
<sequence>MGLLGFGGAAAEAAQVATHHTTVLLDHHAGACEAVARAAEKAAEEVAAIKMRLQVIRDAAREHHLTIAYATGTALPPPDLSSYSPADQQAILNTAIRRASNVCWPTPRPPMRIWPRRFDAPPGTCRASRSMPNSAMRHPQCRRCRRRTATLRRSSGGGIR</sequence>
<accession>P9WKM4</accession>
<accession>L0T816</accession>
<accession>P71546</accession>
<comment type="sequence caution" evidence="1">
    <conflict type="erroneous initiation">
        <sequence resource="EMBL-CDS" id="AAK45241"/>
    </conflict>
</comment>